<feature type="chain" id="PRO_0000097314" description="Probable Rho-GTPase-activating protein 6">
    <location>
        <begin position="1"/>
        <end position="733"/>
    </location>
</feature>
<feature type="domain" description="Rho-GAP" evidence="1">
    <location>
        <begin position="312"/>
        <end position="546"/>
    </location>
</feature>
<feature type="region of interest" description="Disordered" evidence="2">
    <location>
        <begin position="116"/>
        <end position="135"/>
    </location>
</feature>
<feature type="region of interest" description="Disordered" evidence="2">
    <location>
        <begin position="174"/>
        <end position="256"/>
    </location>
</feature>
<feature type="region of interest" description="Disordered" evidence="2">
    <location>
        <begin position="692"/>
        <end position="713"/>
    </location>
</feature>
<feature type="compositionally biased region" description="Polar residues" evidence="2">
    <location>
        <begin position="116"/>
        <end position="125"/>
    </location>
</feature>
<feature type="compositionally biased region" description="Low complexity" evidence="2">
    <location>
        <begin position="179"/>
        <end position="195"/>
    </location>
</feature>
<feature type="compositionally biased region" description="Polar residues" evidence="2">
    <location>
        <begin position="196"/>
        <end position="218"/>
    </location>
</feature>
<feature type="compositionally biased region" description="Polar residues" evidence="2">
    <location>
        <begin position="225"/>
        <end position="240"/>
    </location>
</feature>
<feature type="compositionally biased region" description="Basic residues" evidence="2">
    <location>
        <begin position="704"/>
        <end position="713"/>
    </location>
</feature>
<feature type="site" description="Arginine finger; crucial for GTP hydrolysis by stabilizing the transition state" evidence="1">
    <location>
        <position position="354"/>
    </location>
</feature>
<feature type="modified residue" description="Phosphothreonine" evidence="3">
    <location>
        <position position="141"/>
    </location>
</feature>
<dbReference type="EMBL" id="CU329671">
    <property type="protein sequence ID" value="CAA17813.1"/>
    <property type="molecule type" value="Genomic_DNA"/>
</dbReference>
<dbReference type="PIR" id="T40293">
    <property type="entry name" value="T40293"/>
</dbReference>
<dbReference type="RefSeq" id="NP_595237.1">
    <property type="nucleotide sequence ID" value="NM_001021143.2"/>
</dbReference>
<dbReference type="SMR" id="O43027"/>
<dbReference type="BioGRID" id="276834">
    <property type="interactions" value="22"/>
</dbReference>
<dbReference type="FunCoup" id="O43027">
    <property type="interactions" value="420"/>
</dbReference>
<dbReference type="STRING" id="284812.O43027"/>
<dbReference type="iPTMnet" id="O43027"/>
<dbReference type="PaxDb" id="4896-SPBC354.13.1"/>
<dbReference type="EnsemblFungi" id="SPBC354.13.1">
    <property type="protein sequence ID" value="SPBC354.13.1:pep"/>
    <property type="gene ID" value="SPBC354.13"/>
</dbReference>
<dbReference type="GeneID" id="2540304"/>
<dbReference type="KEGG" id="spo:2540304"/>
<dbReference type="PomBase" id="SPBC354.13">
    <property type="gene designation" value="rga6"/>
</dbReference>
<dbReference type="VEuPathDB" id="FungiDB:SPBC354.13"/>
<dbReference type="eggNOG" id="ENOG502SAYM">
    <property type="taxonomic scope" value="Eukaryota"/>
</dbReference>
<dbReference type="HOGENOM" id="CLU_372617_0_0_1"/>
<dbReference type="InParanoid" id="O43027"/>
<dbReference type="Reactome" id="R-SPO-8980692">
    <property type="pathway name" value="RHOA GTPase cycle"/>
</dbReference>
<dbReference type="Reactome" id="R-SPO-9013026">
    <property type="pathway name" value="RHOB GTPase cycle"/>
</dbReference>
<dbReference type="Reactome" id="R-SPO-9013106">
    <property type="pathway name" value="RHOC GTPase cycle"/>
</dbReference>
<dbReference type="Reactome" id="R-SPO-9013148">
    <property type="pathway name" value="CDC42 GTPase cycle"/>
</dbReference>
<dbReference type="Reactome" id="R-SPO-9013405">
    <property type="pathway name" value="RHOD GTPase cycle"/>
</dbReference>
<dbReference type="Reactome" id="R-SPO-9013406">
    <property type="pathway name" value="RHOQ GTPase cycle"/>
</dbReference>
<dbReference type="Reactome" id="R-SPO-9013409">
    <property type="pathway name" value="RHOJ GTPase cycle"/>
</dbReference>
<dbReference type="Reactome" id="R-SPO-9035034">
    <property type="pathway name" value="RHOF GTPase cycle"/>
</dbReference>
<dbReference type="Reactome" id="R-SPO-9696270">
    <property type="pathway name" value="RND2 GTPase cycle"/>
</dbReference>
<dbReference type="PRO" id="PR:O43027"/>
<dbReference type="Proteomes" id="UP000002485">
    <property type="component" value="Chromosome II"/>
</dbReference>
<dbReference type="GO" id="GO:0032153">
    <property type="term" value="C:cell division site"/>
    <property type="evidence" value="ECO:0000314"/>
    <property type="project" value="PomBase"/>
</dbReference>
<dbReference type="GO" id="GO:0005737">
    <property type="term" value="C:cytoplasm"/>
    <property type="evidence" value="ECO:0000318"/>
    <property type="project" value="GO_Central"/>
</dbReference>
<dbReference type="GO" id="GO:0097575">
    <property type="term" value="C:lateral cell cortex"/>
    <property type="evidence" value="ECO:0000314"/>
    <property type="project" value="PomBase"/>
</dbReference>
<dbReference type="GO" id="GO:0035839">
    <property type="term" value="C:non-growing cell tip"/>
    <property type="evidence" value="ECO:0000314"/>
    <property type="project" value="PomBase"/>
</dbReference>
<dbReference type="GO" id="GO:0005096">
    <property type="term" value="F:GTPase activator activity"/>
    <property type="evidence" value="ECO:0000314"/>
    <property type="project" value="PomBase"/>
</dbReference>
<dbReference type="GO" id="GO:0031267">
    <property type="term" value="F:small GTPase binding"/>
    <property type="evidence" value="ECO:0000353"/>
    <property type="project" value="PomBase"/>
</dbReference>
<dbReference type="GO" id="GO:0032878">
    <property type="term" value="P:regulation of establishment or maintenance of cell polarity"/>
    <property type="evidence" value="ECO:0000269"/>
    <property type="project" value="PomBase"/>
</dbReference>
<dbReference type="GO" id="GO:0007264">
    <property type="term" value="P:small GTPase-mediated signal transduction"/>
    <property type="evidence" value="ECO:0000318"/>
    <property type="project" value="GO_Central"/>
</dbReference>
<dbReference type="CDD" id="cd00159">
    <property type="entry name" value="RhoGAP"/>
    <property type="match status" value="1"/>
</dbReference>
<dbReference type="Gene3D" id="1.10.555.10">
    <property type="entry name" value="Rho GTPase activation protein"/>
    <property type="match status" value="1"/>
</dbReference>
<dbReference type="InterPro" id="IPR008936">
    <property type="entry name" value="Rho_GTPase_activation_prot"/>
</dbReference>
<dbReference type="InterPro" id="IPR000198">
    <property type="entry name" value="RhoGAP_dom"/>
</dbReference>
<dbReference type="Pfam" id="PF00620">
    <property type="entry name" value="RhoGAP"/>
    <property type="match status" value="1"/>
</dbReference>
<dbReference type="SMART" id="SM00324">
    <property type="entry name" value="RhoGAP"/>
    <property type="match status" value="1"/>
</dbReference>
<dbReference type="SUPFAM" id="SSF48350">
    <property type="entry name" value="GTPase activation domain, GAP"/>
    <property type="match status" value="1"/>
</dbReference>
<dbReference type="PROSITE" id="PS50238">
    <property type="entry name" value="RHOGAP"/>
    <property type="match status" value="1"/>
</dbReference>
<protein>
    <recommendedName>
        <fullName>Probable Rho-GTPase-activating protein 6</fullName>
    </recommendedName>
</protein>
<name>RGA6_SCHPO</name>
<keyword id="KW-0343">GTPase activation</keyword>
<keyword id="KW-0597">Phosphoprotein</keyword>
<keyword id="KW-1185">Reference proteome</keyword>
<proteinExistence type="evidence at protein level"/>
<sequence>MTLNPSTLNNGTLGDLKEHKDVVLSSNAQTDEKRFEEPSLEVGGSLAKVENGLSTSISSSASNLEGQQAPFFTKQNSCLSRFRELAQTYNIHEINLEEYVSQIKEVKQSLYSDDSVFNESKSSSPPDAHTDKYFTPCGSPTKLIHSTLLEERDTPSSLEHVSFYLQESAVSEVRFDKPSNNGPLGRSSLNLSSLSHELQTSQDSPSLSATNQLSSSDTLEPLQYPPSSFGSQRQFNASQDSPKRSPSKGSWSSILRRPSLTYSPKRQSTGLHRRSLTNYFKFPHRNAHQHNAIAHNPSVFGKPIGDLTSDPTNLCKFTFPTPECAPPSLLLPHIFAQCVHFLSLNALHVPGIFRISGSGPVIKAITEYFYSPPHFWLDETSEIFKRIGFPSYIDIAAVLKRYIMLLPGGLFTHKDILNLLVPLYVDSSRVKVPIDIRNEMAALCFSQIDSYVRFSILCSLLALLHQIATRTQELENGMENTKDSTLMKPEALGIIFGPLLLGNSSTDLSKSCPSGNVNDLMRFETEKARVEAKIVEGLIIHWPEVLLKINSLDIPNCFSDVGLTDQVAIFTPAVPKEDSPEQIPENVNASEESYPNVKHISKLPLINDSSDNESGNQENDDAVANESTKVVVDNQQPQPKISTVSDTAVPSMSFANNISSRSVISAATDSKPSTRTSPPFVNNTKPIVAKSPVTVTASSETNKKSQKINKKASPRVSLWTKLFGKFRSNKKKS</sequence>
<gene>
    <name type="primary">rga6</name>
    <name type="ORF">SPBC354.13</name>
</gene>
<accession>O43027</accession>
<evidence type="ECO:0000255" key="1">
    <source>
        <dbReference type="PROSITE-ProRule" id="PRU00172"/>
    </source>
</evidence>
<evidence type="ECO:0000256" key="2">
    <source>
        <dbReference type="SAM" id="MobiDB-lite"/>
    </source>
</evidence>
<evidence type="ECO:0000269" key="3">
    <source>
    </source>
</evidence>
<organism>
    <name type="scientific">Schizosaccharomyces pombe (strain 972 / ATCC 24843)</name>
    <name type="common">Fission yeast</name>
    <dbReference type="NCBI Taxonomy" id="284812"/>
    <lineage>
        <taxon>Eukaryota</taxon>
        <taxon>Fungi</taxon>
        <taxon>Dikarya</taxon>
        <taxon>Ascomycota</taxon>
        <taxon>Taphrinomycotina</taxon>
        <taxon>Schizosaccharomycetes</taxon>
        <taxon>Schizosaccharomycetales</taxon>
        <taxon>Schizosaccharomycetaceae</taxon>
        <taxon>Schizosaccharomyces</taxon>
    </lineage>
</organism>
<reference key="1">
    <citation type="journal article" date="2002" name="Nature">
        <title>The genome sequence of Schizosaccharomyces pombe.</title>
        <authorList>
            <person name="Wood V."/>
            <person name="Gwilliam R."/>
            <person name="Rajandream M.A."/>
            <person name="Lyne M.H."/>
            <person name="Lyne R."/>
            <person name="Stewart A."/>
            <person name="Sgouros J.G."/>
            <person name="Peat N."/>
            <person name="Hayles J."/>
            <person name="Baker S.G."/>
            <person name="Basham D."/>
            <person name="Bowman S."/>
            <person name="Brooks K."/>
            <person name="Brown D."/>
            <person name="Brown S."/>
            <person name="Chillingworth T."/>
            <person name="Churcher C.M."/>
            <person name="Collins M."/>
            <person name="Connor R."/>
            <person name="Cronin A."/>
            <person name="Davis P."/>
            <person name="Feltwell T."/>
            <person name="Fraser A."/>
            <person name="Gentles S."/>
            <person name="Goble A."/>
            <person name="Hamlin N."/>
            <person name="Harris D.E."/>
            <person name="Hidalgo J."/>
            <person name="Hodgson G."/>
            <person name="Holroyd S."/>
            <person name="Hornsby T."/>
            <person name="Howarth S."/>
            <person name="Huckle E.J."/>
            <person name="Hunt S."/>
            <person name="Jagels K."/>
            <person name="James K.D."/>
            <person name="Jones L."/>
            <person name="Jones M."/>
            <person name="Leather S."/>
            <person name="McDonald S."/>
            <person name="McLean J."/>
            <person name="Mooney P."/>
            <person name="Moule S."/>
            <person name="Mungall K.L."/>
            <person name="Murphy L.D."/>
            <person name="Niblett D."/>
            <person name="Odell C."/>
            <person name="Oliver K."/>
            <person name="O'Neil S."/>
            <person name="Pearson D."/>
            <person name="Quail M.A."/>
            <person name="Rabbinowitsch E."/>
            <person name="Rutherford K.M."/>
            <person name="Rutter S."/>
            <person name="Saunders D."/>
            <person name="Seeger K."/>
            <person name="Sharp S."/>
            <person name="Skelton J."/>
            <person name="Simmonds M.N."/>
            <person name="Squares R."/>
            <person name="Squares S."/>
            <person name="Stevens K."/>
            <person name="Taylor K."/>
            <person name="Taylor R.G."/>
            <person name="Tivey A."/>
            <person name="Walsh S.V."/>
            <person name="Warren T."/>
            <person name="Whitehead S."/>
            <person name="Woodward J.R."/>
            <person name="Volckaert G."/>
            <person name="Aert R."/>
            <person name="Robben J."/>
            <person name="Grymonprez B."/>
            <person name="Weltjens I."/>
            <person name="Vanstreels E."/>
            <person name="Rieger M."/>
            <person name="Schaefer M."/>
            <person name="Mueller-Auer S."/>
            <person name="Gabel C."/>
            <person name="Fuchs M."/>
            <person name="Duesterhoeft A."/>
            <person name="Fritzc C."/>
            <person name="Holzer E."/>
            <person name="Moestl D."/>
            <person name="Hilbert H."/>
            <person name="Borzym K."/>
            <person name="Langer I."/>
            <person name="Beck A."/>
            <person name="Lehrach H."/>
            <person name="Reinhardt R."/>
            <person name="Pohl T.M."/>
            <person name="Eger P."/>
            <person name="Zimmermann W."/>
            <person name="Wedler H."/>
            <person name="Wambutt R."/>
            <person name="Purnelle B."/>
            <person name="Goffeau A."/>
            <person name="Cadieu E."/>
            <person name="Dreano S."/>
            <person name="Gloux S."/>
            <person name="Lelaure V."/>
            <person name="Mottier S."/>
            <person name="Galibert F."/>
            <person name="Aves S.J."/>
            <person name="Xiang Z."/>
            <person name="Hunt C."/>
            <person name="Moore K."/>
            <person name="Hurst S.M."/>
            <person name="Lucas M."/>
            <person name="Rochet M."/>
            <person name="Gaillardin C."/>
            <person name="Tallada V.A."/>
            <person name="Garzon A."/>
            <person name="Thode G."/>
            <person name="Daga R.R."/>
            <person name="Cruzado L."/>
            <person name="Jimenez J."/>
            <person name="Sanchez M."/>
            <person name="del Rey F."/>
            <person name="Benito J."/>
            <person name="Dominguez A."/>
            <person name="Revuelta J.L."/>
            <person name="Moreno S."/>
            <person name="Armstrong J."/>
            <person name="Forsburg S.L."/>
            <person name="Cerutti L."/>
            <person name="Lowe T."/>
            <person name="McCombie W.R."/>
            <person name="Paulsen I."/>
            <person name="Potashkin J."/>
            <person name="Shpakovski G.V."/>
            <person name="Ussery D."/>
            <person name="Barrell B.G."/>
            <person name="Nurse P."/>
        </authorList>
    </citation>
    <scope>NUCLEOTIDE SEQUENCE [LARGE SCALE GENOMIC DNA]</scope>
    <source>
        <strain>972 / ATCC 24843</strain>
    </source>
</reference>
<reference key="2">
    <citation type="journal article" date="2008" name="J. Proteome Res.">
        <title>Phosphoproteome analysis of fission yeast.</title>
        <authorList>
            <person name="Wilson-Grady J.T."/>
            <person name="Villen J."/>
            <person name="Gygi S.P."/>
        </authorList>
    </citation>
    <scope>PHOSPHORYLATION [LARGE SCALE ANALYSIS] AT THR-141</scope>
    <scope>IDENTIFICATION BY MASS SPECTROMETRY</scope>
</reference>